<name>E75_CHOFU</name>
<proteinExistence type="evidence at transcript level"/>
<organism>
    <name type="scientific">Choristoneura fumiferana</name>
    <name type="common">Spruce budworm moth</name>
    <name type="synonym">Archips fumiferana</name>
    <dbReference type="NCBI Taxonomy" id="7141"/>
    <lineage>
        <taxon>Eukaryota</taxon>
        <taxon>Metazoa</taxon>
        <taxon>Ecdysozoa</taxon>
        <taxon>Arthropoda</taxon>
        <taxon>Hexapoda</taxon>
        <taxon>Insecta</taxon>
        <taxon>Pterygota</taxon>
        <taxon>Neoptera</taxon>
        <taxon>Endopterygota</taxon>
        <taxon>Lepidoptera</taxon>
        <taxon>Glossata</taxon>
        <taxon>Ditrysia</taxon>
        <taxon>Tortricoidea</taxon>
        <taxon>Tortricidae</taxon>
        <taxon>Tortricinae</taxon>
        <taxon>Choristoneura</taxon>
    </lineage>
</organism>
<keyword id="KW-0238">DNA-binding</keyword>
<keyword id="KW-0479">Metal-binding</keyword>
<keyword id="KW-0539">Nucleus</keyword>
<keyword id="KW-0675">Receptor</keyword>
<keyword id="KW-0804">Transcription</keyword>
<keyword id="KW-0805">Transcription regulation</keyword>
<keyword id="KW-0862">Zinc</keyword>
<keyword id="KW-0863">Zinc-finger</keyword>
<gene>
    <name type="primary">E75</name>
    <name type="synonym">CHR75</name>
    <name type="synonym">NR1D3</name>
</gene>
<protein>
    <recommendedName>
        <fullName>Ecdysone-inducible protein E75</fullName>
    </recommendedName>
    <alternativeName>
        <fullName>Nuclear receptor subfamily 1 group D member 3</fullName>
    </alternativeName>
</protein>
<dbReference type="EMBL" id="U63930">
    <property type="protein sequence ID" value="AAB52717.1"/>
    <property type="molecule type" value="mRNA"/>
</dbReference>
<dbReference type="SMR" id="O01639"/>
<dbReference type="OrthoDB" id="5771769at2759"/>
<dbReference type="GO" id="GO:0005634">
    <property type="term" value="C:nucleus"/>
    <property type="evidence" value="ECO:0007669"/>
    <property type="project" value="UniProtKB-SubCell"/>
</dbReference>
<dbReference type="GO" id="GO:0004879">
    <property type="term" value="F:nuclear receptor activity"/>
    <property type="evidence" value="ECO:0007669"/>
    <property type="project" value="InterPro"/>
</dbReference>
<dbReference type="GO" id="GO:0000978">
    <property type="term" value="F:RNA polymerase II cis-regulatory region sequence-specific DNA binding"/>
    <property type="evidence" value="ECO:0007669"/>
    <property type="project" value="TreeGrafter"/>
</dbReference>
<dbReference type="GO" id="GO:0008270">
    <property type="term" value="F:zinc ion binding"/>
    <property type="evidence" value="ECO:0007669"/>
    <property type="project" value="UniProtKB-KW"/>
</dbReference>
<dbReference type="GO" id="GO:0030154">
    <property type="term" value="P:cell differentiation"/>
    <property type="evidence" value="ECO:0007669"/>
    <property type="project" value="TreeGrafter"/>
</dbReference>
<dbReference type="GO" id="GO:0009755">
    <property type="term" value="P:hormone-mediated signaling pathway"/>
    <property type="evidence" value="ECO:0007669"/>
    <property type="project" value="TreeGrafter"/>
</dbReference>
<dbReference type="GO" id="GO:0000122">
    <property type="term" value="P:negative regulation of transcription by RNA polymerase II"/>
    <property type="evidence" value="ECO:0007669"/>
    <property type="project" value="TreeGrafter"/>
</dbReference>
<dbReference type="GO" id="GO:0045944">
    <property type="term" value="P:positive regulation of transcription by RNA polymerase II"/>
    <property type="evidence" value="ECO:0007669"/>
    <property type="project" value="TreeGrafter"/>
</dbReference>
<dbReference type="CDD" id="cd07166">
    <property type="entry name" value="NR_DBD_REV_ERB"/>
    <property type="match status" value="1"/>
</dbReference>
<dbReference type="FunFam" id="1.10.565.10:FF:000029">
    <property type="entry name" value="Ecdysone-induced protein 75B, isoform B"/>
    <property type="match status" value="1"/>
</dbReference>
<dbReference type="FunFam" id="3.30.50.10:FF:000013">
    <property type="entry name" value="Nuclear receptor subfamily 1 group D member 2"/>
    <property type="match status" value="1"/>
</dbReference>
<dbReference type="Gene3D" id="3.30.50.10">
    <property type="entry name" value="Erythroid Transcription Factor GATA-1, subunit A"/>
    <property type="match status" value="1"/>
</dbReference>
<dbReference type="Gene3D" id="1.10.565.10">
    <property type="entry name" value="Retinoid X Receptor"/>
    <property type="match status" value="1"/>
</dbReference>
<dbReference type="InterPro" id="IPR035500">
    <property type="entry name" value="NHR-like_dom_sf"/>
</dbReference>
<dbReference type="InterPro" id="IPR000536">
    <property type="entry name" value="Nucl_hrmn_rcpt_lig-bd"/>
</dbReference>
<dbReference type="InterPro" id="IPR050234">
    <property type="entry name" value="Nuclear_hormone_rcpt_NR1"/>
</dbReference>
<dbReference type="InterPro" id="IPR001723">
    <property type="entry name" value="Nuclear_hrmn_rcpt"/>
</dbReference>
<dbReference type="InterPro" id="IPR001728">
    <property type="entry name" value="ThyrH_rcpt"/>
</dbReference>
<dbReference type="InterPro" id="IPR001628">
    <property type="entry name" value="Znf_hrmn_rcpt"/>
</dbReference>
<dbReference type="InterPro" id="IPR013088">
    <property type="entry name" value="Znf_NHR/GATA"/>
</dbReference>
<dbReference type="PANTHER" id="PTHR24082:SF473">
    <property type="entry name" value="ECDYSONE-INDUCED PROTEIN 75B, ISOFORM B"/>
    <property type="match status" value="1"/>
</dbReference>
<dbReference type="PANTHER" id="PTHR24082">
    <property type="entry name" value="NUCLEAR HORMONE RECEPTOR"/>
    <property type="match status" value="1"/>
</dbReference>
<dbReference type="Pfam" id="PF00104">
    <property type="entry name" value="Hormone_recep"/>
    <property type="match status" value="1"/>
</dbReference>
<dbReference type="Pfam" id="PF00105">
    <property type="entry name" value="zf-C4"/>
    <property type="match status" value="1"/>
</dbReference>
<dbReference type="PRINTS" id="PR00398">
    <property type="entry name" value="STRDHORMONER"/>
</dbReference>
<dbReference type="PRINTS" id="PR00047">
    <property type="entry name" value="STROIDFINGER"/>
</dbReference>
<dbReference type="PRINTS" id="PR00546">
    <property type="entry name" value="THYROIDHORMR"/>
</dbReference>
<dbReference type="SMART" id="SM00430">
    <property type="entry name" value="HOLI"/>
    <property type="match status" value="1"/>
</dbReference>
<dbReference type="SMART" id="SM00399">
    <property type="entry name" value="ZnF_C4"/>
    <property type="match status" value="1"/>
</dbReference>
<dbReference type="SUPFAM" id="SSF57716">
    <property type="entry name" value="Glucocorticoid receptor-like (DNA-binding domain)"/>
    <property type="match status" value="1"/>
</dbReference>
<dbReference type="SUPFAM" id="SSF48508">
    <property type="entry name" value="Nuclear receptor ligand-binding domain"/>
    <property type="match status" value="1"/>
</dbReference>
<dbReference type="PROSITE" id="PS51843">
    <property type="entry name" value="NR_LBD"/>
    <property type="match status" value="1"/>
</dbReference>
<dbReference type="PROSITE" id="PS00031">
    <property type="entry name" value="NUCLEAR_REC_DBD_1"/>
    <property type="match status" value="1"/>
</dbReference>
<dbReference type="PROSITE" id="PS51030">
    <property type="entry name" value="NUCLEAR_REC_DBD_2"/>
    <property type="match status" value="1"/>
</dbReference>
<accession>O01639</accession>
<sequence length="690" mass="76663">MTLVMSPDSSYGRYDAQPPVDGGMVNPVHREREPELHIEFDGTTVLCRVCGDKASGFHYGVHSCEGCKGFFRRSIQQKIQYRPCTKNQQCSILRINRNRCQYCRLKKCIAVGMSRDAVRFGRVPKREKARILAAMQQSSSSRAHEQAAAAELDDAPRLLARVVRAHLDTCEFTRDRVAAMRARARDCPTYSQPTLACPLNPAPELQSEKEFSQRFAHVIRGVIDFAGLIPGFQLLTQDDKFTLLKSGLFDALFVRLICMFDAPLNSIICLNGQLMKRDSIQSGANARFLVDSTFKFAERMNSMNLTDAEIGLFCAIVLITPDRPGLRNIELVERMHARLKSCLQTVIAQNRADRPGFLRELMDTLPDLRTLSTLHTEKLVVFRTEHKELLRQQMWGDEEVCPWADSGVDDSARSPLGSVSSSESGEAPSDCGTPLLAATLAGRRRLDSRGSVDEEALGVAHLAHNGLTVTPVRPPPRYRKLDSPTDSGIESGNEKHERIVGPGSGCSSPRSSLEEHMEDRRPLAADDMPVLKRVLQAPPLYDASSLMDEAYKPHKKFRAMRRDTGEAEARPMRPTPSPQPMHPHPGSPAHPAHPAHSPRPLRAPLSSTHSVLAKSLMEGPRMTPEQLKRTDIIQQYMRRGEAGEECRAGLLLYRGASPLQVDVADAPQPLNLSKKSPSPPRSFMPPMLEA</sequence>
<evidence type="ECO:0000250" key="1"/>
<evidence type="ECO:0000255" key="2">
    <source>
        <dbReference type="PROSITE-ProRule" id="PRU00407"/>
    </source>
</evidence>
<evidence type="ECO:0000255" key="3">
    <source>
        <dbReference type="PROSITE-ProRule" id="PRU01189"/>
    </source>
</evidence>
<evidence type="ECO:0000256" key="4">
    <source>
        <dbReference type="SAM" id="MobiDB-lite"/>
    </source>
</evidence>
<evidence type="ECO:0000305" key="5"/>
<reference key="1">
    <citation type="journal article" date="1997" name="Dev. Genet.">
        <title>Cloning and development expression of Choristoneura hormone receptor 75: a homologue of the Drosophila E75A gene.</title>
        <authorList>
            <person name="Palli S.R."/>
            <person name="Ladd T.R."/>
            <person name="Ricci A.R."/>
            <person name="Sohi S.S."/>
            <person name="Retnakaran A."/>
        </authorList>
    </citation>
    <scope>NUCLEOTIDE SEQUENCE [MRNA]</scope>
</reference>
<feature type="chain" id="PRO_0000053507" description="Ecdysone-inducible protein E75">
    <location>
        <begin position="1"/>
        <end position="690"/>
    </location>
</feature>
<feature type="domain" description="NR LBD" evidence="3">
    <location>
        <begin position="154"/>
        <end position="401"/>
    </location>
</feature>
<feature type="DNA-binding region" description="Nuclear receptor" evidence="2">
    <location>
        <begin position="44"/>
        <end position="120"/>
    </location>
</feature>
<feature type="zinc finger region" description="NR C4-type" evidence="2">
    <location>
        <begin position="47"/>
        <end position="67"/>
    </location>
</feature>
<feature type="zinc finger region" description="NR C4-type" evidence="2">
    <location>
        <begin position="84"/>
        <end position="108"/>
    </location>
</feature>
<feature type="region of interest" description="Disordered" evidence="4">
    <location>
        <begin position="411"/>
        <end position="434"/>
    </location>
</feature>
<feature type="region of interest" description="Disordered" evidence="4">
    <location>
        <begin position="467"/>
        <end position="516"/>
    </location>
</feature>
<feature type="region of interest" description="Disordered" evidence="4">
    <location>
        <begin position="562"/>
        <end position="604"/>
    </location>
</feature>
<feature type="region of interest" description="Disordered" evidence="4">
    <location>
        <begin position="666"/>
        <end position="690"/>
    </location>
</feature>
<feature type="compositionally biased region" description="Low complexity" evidence="4">
    <location>
        <begin position="414"/>
        <end position="434"/>
    </location>
</feature>
<feature type="compositionally biased region" description="Basic and acidic residues" evidence="4">
    <location>
        <begin position="562"/>
        <end position="571"/>
    </location>
</feature>
<feature type="compositionally biased region" description="Pro residues" evidence="4">
    <location>
        <begin position="573"/>
        <end position="588"/>
    </location>
</feature>
<feature type="compositionally biased region" description="Low complexity" evidence="4">
    <location>
        <begin position="589"/>
        <end position="604"/>
    </location>
</feature>
<feature type="compositionally biased region" description="Low complexity" evidence="4">
    <location>
        <begin position="667"/>
        <end position="676"/>
    </location>
</feature>
<comment type="function">
    <text evidence="1">Orphan receptor possibly involved in the regulation of genes in the ecdysteroid cascade.</text>
</comment>
<comment type="subcellular location">
    <subcellularLocation>
        <location evidence="2">Nucleus</location>
    </subcellularLocation>
</comment>
<comment type="similarity">
    <text evidence="5">Belongs to the nuclear hormone receptor family. NR1 subfamily.</text>
</comment>